<dbReference type="EMBL" id="BC012934">
    <property type="protein sequence ID" value="AAH12934.1"/>
    <property type="molecule type" value="mRNA"/>
</dbReference>
<dbReference type="CCDS" id="CCDS35308.1"/>
<dbReference type="RefSeq" id="NP_940853.1">
    <property type="nucleotide sequence ID" value="NM_198451.4"/>
</dbReference>
<dbReference type="SMR" id="Q6PJQ5"/>
<dbReference type="BioGRID" id="126579">
    <property type="interactions" value="43"/>
</dbReference>
<dbReference type="FunCoup" id="Q6PJQ5">
    <property type="interactions" value="36"/>
</dbReference>
<dbReference type="IntAct" id="Q6PJQ5">
    <property type="interactions" value="37"/>
</dbReference>
<dbReference type="MINT" id="Q6PJQ5"/>
<dbReference type="STRING" id="9606.ENSP00000427329"/>
<dbReference type="PhosphoSitePlus" id="Q6PJQ5"/>
<dbReference type="BioMuta" id="FOXR2"/>
<dbReference type="DMDM" id="74737923"/>
<dbReference type="MassIVE" id="Q6PJQ5"/>
<dbReference type="PaxDb" id="9606-ENSP00000427329"/>
<dbReference type="PeptideAtlas" id="Q6PJQ5"/>
<dbReference type="ProteomicsDB" id="67215"/>
<dbReference type="TopDownProteomics" id="Q6PJQ5"/>
<dbReference type="Antibodypedia" id="12993">
    <property type="antibodies" value="117 antibodies from 25 providers"/>
</dbReference>
<dbReference type="DNASU" id="139628"/>
<dbReference type="Ensembl" id="ENST00000339140.5">
    <property type="protein sequence ID" value="ENSP00000427329.2"/>
    <property type="gene ID" value="ENSG00000189299.7"/>
</dbReference>
<dbReference type="GeneID" id="139628"/>
<dbReference type="KEGG" id="hsa:139628"/>
<dbReference type="MANE-Select" id="ENST00000339140.5">
    <property type="protein sequence ID" value="ENSP00000427329.2"/>
    <property type="RefSeq nucleotide sequence ID" value="NM_198451.4"/>
    <property type="RefSeq protein sequence ID" value="NP_940853.1"/>
</dbReference>
<dbReference type="UCSC" id="uc004duo.4">
    <property type="organism name" value="human"/>
</dbReference>
<dbReference type="AGR" id="HGNC:30469"/>
<dbReference type="CTD" id="139628"/>
<dbReference type="DisGeNET" id="139628"/>
<dbReference type="GeneCards" id="FOXR2"/>
<dbReference type="HGNC" id="HGNC:30469">
    <property type="gene designation" value="FOXR2"/>
</dbReference>
<dbReference type="HPA" id="ENSG00000189299">
    <property type="expression patterns" value="Tissue enriched (testis)"/>
</dbReference>
<dbReference type="MIM" id="300949">
    <property type="type" value="gene"/>
</dbReference>
<dbReference type="neXtProt" id="NX_Q6PJQ5"/>
<dbReference type="OpenTargets" id="ENSG00000189299"/>
<dbReference type="PharmGKB" id="PA134950741"/>
<dbReference type="VEuPathDB" id="HostDB:ENSG00000189299"/>
<dbReference type="eggNOG" id="KOG2294">
    <property type="taxonomic scope" value="Eukaryota"/>
</dbReference>
<dbReference type="GeneTree" id="ENSGT00940000162993"/>
<dbReference type="HOGENOM" id="CLU_077699_3_1_1"/>
<dbReference type="InParanoid" id="Q6PJQ5"/>
<dbReference type="OMA" id="FFWTAPD"/>
<dbReference type="OrthoDB" id="10070006at2759"/>
<dbReference type="PAN-GO" id="Q6PJQ5">
    <property type="GO annotations" value="2 GO annotations based on evolutionary models"/>
</dbReference>
<dbReference type="PhylomeDB" id="Q6PJQ5"/>
<dbReference type="TreeFam" id="TF329867"/>
<dbReference type="PathwayCommons" id="Q6PJQ5"/>
<dbReference type="SignaLink" id="Q6PJQ5"/>
<dbReference type="BioGRID-ORCS" id="139628">
    <property type="hits" value="7 hits in 794 CRISPR screens"/>
</dbReference>
<dbReference type="ChiTaRS" id="FOXR2">
    <property type="organism name" value="human"/>
</dbReference>
<dbReference type="GenomeRNAi" id="139628"/>
<dbReference type="Pharos" id="Q6PJQ5">
    <property type="development level" value="Tbio"/>
</dbReference>
<dbReference type="PRO" id="PR:Q6PJQ5"/>
<dbReference type="Proteomes" id="UP000005640">
    <property type="component" value="Chromosome X"/>
</dbReference>
<dbReference type="RNAct" id="Q6PJQ5">
    <property type="molecule type" value="protein"/>
</dbReference>
<dbReference type="Bgee" id="ENSG00000189299">
    <property type="expression patterns" value="Expressed in male germ line stem cell (sensu Vertebrata) in testis and 4 other cell types or tissues"/>
</dbReference>
<dbReference type="GO" id="GO:0000785">
    <property type="term" value="C:chromatin"/>
    <property type="evidence" value="ECO:0000247"/>
    <property type="project" value="NTNU_SB"/>
</dbReference>
<dbReference type="GO" id="GO:0005654">
    <property type="term" value="C:nucleoplasm"/>
    <property type="evidence" value="ECO:0000314"/>
    <property type="project" value="HPA"/>
</dbReference>
<dbReference type="GO" id="GO:0005634">
    <property type="term" value="C:nucleus"/>
    <property type="evidence" value="ECO:0000318"/>
    <property type="project" value="GO_Central"/>
</dbReference>
<dbReference type="GO" id="GO:0000981">
    <property type="term" value="F:DNA-binding transcription factor activity, RNA polymerase II-specific"/>
    <property type="evidence" value="ECO:0000247"/>
    <property type="project" value="NTNU_SB"/>
</dbReference>
<dbReference type="GO" id="GO:1990837">
    <property type="term" value="F:sequence-specific double-stranded DNA binding"/>
    <property type="evidence" value="ECO:0000314"/>
    <property type="project" value="ARUK-UCL"/>
</dbReference>
<dbReference type="CDD" id="cd20036">
    <property type="entry name" value="FH_FOXR"/>
    <property type="match status" value="1"/>
</dbReference>
<dbReference type="FunFam" id="1.10.10.10:FF:000505">
    <property type="entry name" value="Forkhead box R1"/>
    <property type="match status" value="1"/>
</dbReference>
<dbReference type="Gene3D" id="1.10.10.10">
    <property type="entry name" value="Winged helix-like DNA-binding domain superfamily/Winged helix DNA-binding domain"/>
    <property type="match status" value="1"/>
</dbReference>
<dbReference type="InterPro" id="IPR001766">
    <property type="entry name" value="Fork_head_dom"/>
</dbReference>
<dbReference type="InterPro" id="IPR052328">
    <property type="entry name" value="FOX_transcription_regulators"/>
</dbReference>
<dbReference type="InterPro" id="IPR036388">
    <property type="entry name" value="WH-like_DNA-bd_sf"/>
</dbReference>
<dbReference type="InterPro" id="IPR036390">
    <property type="entry name" value="WH_DNA-bd_sf"/>
</dbReference>
<dbReference type="PANTHER" id="PTHR46789">
    <property type="entry name" value="FORKHEAD BOX PROTEIN R1"/>
    <property type="match status" value="1"/>
</dbReference>
<dbReference type="PANTHER" id="PTHR46789:SF2">
    <property type="entry name" value="FORKHEAD BOX PROTEIN R2"/>
    <property type="match status" value="1"/>
</dbReference>
<dbReference type="Pfam" id="PF00250">
    <property type="entry name" value="Forkhead"/>
    <property type="match status" value="1"/>
</dbReference>
<dbReference type="PRINTS" id="PR00053">
    <property type="entry name" value="FORKHEAD"/>
</dbReference>
<dbReference type="SMART" id="SM00339">
    <property type="entry name" value="FH"/>
    <property type="match status" value="1"/>
</dbReference>
<dbReference type="SUPFAM" id="SSF46785">
    <property type="entry name" value="Winged helix' DNA-binding domain"/>
    <property type="match status" value="1"/>
</dbReference>
<dbReference type="PROSITE" id="PS50039">
    <property type="entry name" value="FORK_HEAD_3"/>
    <property type="match status" value="1"/>
</dbReference>
<sequence length="311" mass="35924">MDLKLKDCEFWYSLHGQVPGLLDWDMRNELFLPCTTDQCSLAEQILAKYRVGVMKPPEMPQKRRPSPDGDGPPCEPNLWMWVDPNILCPLGSQEAPKPSGKEDLTNISPFPQPPQKDEGSNCSEDKVVESLPSSSSEQSPLQKQGIHSPSDFELTEEEAEEPDDNSLQSPEMKCYQSQKLWQINNQEKSWQRPPLNCSHLIALALRNNPHCGLSVQEIYNFTRQHFPFFWTAPDGWKSTIHYNLCFLDSFEKVPDSLKDEDNARPRSCLWKLTKEGHRRFWEETRVLAFAQRERIQECMSQPELLTSLFDL</sequence>
<gene>
    <name type="primary">FOXR2</name>
    <name type="synonym">FOXN6</name>
</gene>
<accession>Q6PJQ5</accession>
<comment type="interaction">
    <interactant intactId="EBI-8468543">
        <id>Q6PJQ5</id>
    </interactant>
    <interactant intactId="EBI-395261">
        <id>P24863</id>
        <label>CCNC</label>
    </interactant>
    <organismsDiffer>false</organismsDiffer>
    <experiments>3</experiments>
</comment>
<comment type="interaction">
    <interactant intactId="EBI-8468543">
        <id>Q6PJQ5</id>
    </interactant>
    <interactant intactId="EBI-2952745">
        <id>Q01546</id>
        <label>KRT76</label>
    </interactant>
    <organismsDiffer>false</organismsDiffer>
    <experiments>3</experiments>
</comment>
<comment type="interaction">
    <interactant intactId="EBI-8468543">
        <id>Q6PJQ5</id>
    </interactant>
    <interactant intactId="EBI-724639">
        <id>Q9UBV8</id>
        <label>PEF1</label>
    </interactant>
    <organismsDiffer>false</organismsDiffer>
    <experiments>7</experiments>
</comment>
<comment type="interaction">
    <interactant intactId="EBI-8468543">
        <id>Q6PJQ5</id>
    </interactant>
    <interactant intactId="EBI-1055079">
        <id>O15160</id>
        <label>POLR1C</label>
    </interactant>
    <organismsDiffer>false</organismsDiffer>
    <experiments>3</experiments>
</comment>
<comment type="subcellular location">
    <subcellularLocation>
        <location evidence="1">Nucleus</location>
    </subcellularLocation>
</comment>
<comment type="tissue specificity">
    <text evidence="3">Expressed in breast cancer cell lines and primary cancer.</text>
</comment>
<protein>
    <recommendedName>
        <fullName>Forkhead box protein R2</fullName>
    </recommendedName>
    <alternativeName>
        <fullName>Forkhead box protein N6</fullName>
    </alternativeName>
</protein>
<organism>
    <name type="scientific">Homo sapiens</name>
    <name type="common">Human</name>
    <dbReference type="NCBI Taxonomy" id="9606"/>
    <lineage>
        <taxon>Eukaryota</taxon>
        <taxon>Metazoa</taxon>
        <taxon>Chordata</taxon>
        <taxon>Craniata</taxon>
        <taxon>Vertebrata</taxon>
        <taxon>Euteleostomi</taxon>
        <taxon>Mammalia</taxon>
        <taxon>Eutheria</taxon>
        <taxon>Euarchontoglires</taxon>
        <taxon>Primates</taxon>
        <taxon>Haplorrhini</taxon>
        <taxon>Catarrhini</taxon>
        <taxon>Hominidae</taxon>
        <taxon>Homo</taxon>
    </lineage>
</organism>
<feature type="chain" id="PRO_0000253780" description="Forkhead box protein R2">
    <location>
        <begin position="1"/>
        <end position="311"/>
    </location>
</feature>
<feature type="DNA-binding region" description="Fork-head" evidence="1">
    <location>
        <begin position="192"/>
        <end position="294"/>
    </location>
</feature>
<feature type="region of interest" description="Disordered" evidence="2">
    <location>
        <begin position="56"/>
        <end position="76"/>
    </location>
</feature>
<feature type="region of interest" description="Disordered" evidence="2">
    <location>
        <begin position="90"/>
        <end position="171"/>
    </location>
</feature>
<feature type="compositionally biased region" description="Basic and acidic residues" evidence="2">
    <location>
        <begin position="115"/>
        <end position="128"/>
    </location>
</feature>
<feature type="compositionally biased region" description="Low complexity" evidence="2">
    <location>
        <begin position="129"/>
        <end position="143"/>
    </location>
</feature>
<feature type="compositionally biased region" description="Acidic residues" evidence="2">
    <location>
        <begin position="153"/>
        <end position="164"/>
    </location>
</feature>
<feature type="sequence variant" id="VAR_028731" description="In dbSNP:rs2375465.">
    <original>V</original>
    <variation>A</variation>
    <location>
        <position position="286"/>
    </location>
</feature>
<keyword id="KW-0238">DNA-binding</keyword>
<keyword id="KW-0539">Nucleus</keyword>
<keyword id="KW-1267">Proteomics identification</keyword>
<keyword id="KW-1185">Reference proteome</keyword>
<keyword id="KW-0804">Transcription</keyword>
<keyword id="KW-0805">Transcription regulation</keyword>
<evidence type="ECO:0000255" key="1">
    <source>
        <dbReference type="PROSITE-ProRule" id="PRU00089"/>
    </source>
</evidence>
<evidence type="ECO:0000256" key="2">
    <source>
        <dbReference type="SAM" id="MobiDB-lite"/>
    </source>
</evidence>
<evidence type="ECO:0000269" key="3">
    <source>
    </source>
</evidence>
<proteinExistence type="evidence at protein level"/>
<reference key="1">
    <citation type="journal article" date="2004" name="Genome Res.">
        <title>The status, quality, and expansion of the NIH full-length cDNA project: the Mammalian Gene Collection (MGC).</title>
        <authorList>
            <consortium name="The MGC Project Team"/>
        </authorList>
    </citation>
    <scope>NUCLEOTIDE SEQUENCE [LARGE SCALE MRNA]</scope>
    <source>
        <tissue>Mammary gland</tissue>
    </source>
</reference>
<reference key="2">
    <citation type="journal article" date="2004" name="Int. J. Oncol.">
        <title>Identification and characterization of human FOXN6, mouse Foxn6, and rat Foxn6 genes in silico.</title>
        <authorList>
            <person name="Katoh M."/>
            <person name="Katoh M."/>
        </authorList>
    </citation>
    <scope>TISSUE SPECIFICITY</scope>
</reference>
<name>FOXR2_HUMAN</name>